<organism>
    <name type="scientific">Acinetobacter baumannii (strain AYE)</name>
    <dbReference type="NCBI Taxonomy" id="509173"/>
    <lineage>
        <taxon>Bacteria</taxon>
        <taxon>Pseudomonadati</taxon>
        <taxon>Pseudomonadota</taxon>
        <taxon>Gammaproteobacteria</taxon>
        <taxon>Moraxellales</taxon>
        <taxon>Moraxellaceae</taxon>
        <taxon>Acinetobacter</taxon>
        <taxon>Acinetobacter calcoaceticus/baumannii complex</taxon>
    </lineage>
</organism>
<gene>
    <name evidence="1" type="primary">trhO</name>
    <name type="ordered locus">ABAYE0771</name>
</gene>
<feature type="chain" id="PRO_1000200333" description="tRNA uridine(34) hydroxylase">
    <location>
        <begin position="1"/>
        <end position="314"/>
    </location>
</feature>
<feature type="domain" description="Rhodanese" evidence="1">
    <location>
        <begin position="140"/>
        <end position="234"/>
    </location>
</feature>
<feature type="active site" description="Cysteine persulfide intermediate" evidence="1">
    <location>
        <position position="194"/>
    </location>
</feature>
<accession>B0VEG5</accession>
<keyword id="KW-0560">Oxidoreductase</keyword>
<keyword id="KW-0819">tRNA processing</keyword>
<comment type="function">
    <text evidence="1">Catalyzes oxygen-dependent 5-hydroxyuridine (ho5U) modification at position 34 in tRNAs.</text>
</comment>
<comment type="catalytic activity">
    <reaction evidence="1">
        <text>uridine(34) in tRNA + AH2 + O2 = 5-hydroxyuridine(34) in tRNA + A + H2O</text>
        <dbReference type="Rhea" id="RHEA:64224"/>
        <dbReference type="Rhea" id="RHEA-COMP:11727"/>
        <dbReference type="Rhea" id="RHEA-COMP:13381"/>
        <dbReference type="ChEBI" id="CHEBI:13193"/>
        <dbReference type="ChEBI" id="CHEBI:15377"/>
        <dbReference type="ChEBI" id="CHEBI:15379"/>
        <dbReference type="ChEBI" id="CHEBI:17499"/>
        <dbReference type="ChEBI" id="CHEBI:65315"/>
        <dbReference type="ChEBI" id="CHEBI:136877"/>
    </reaction>
</comment>
<comment type="similarity">
    <text evidence="1">Belongs to the TrhO family.</text>
</comment>
<name>TRHO_ACIBY</name>
<evidence type="ECO:0000255" key="1">
    <source>
        <dbReference type="HAMAP-Rule" id="MF_00469"/>
    </source>
</evidence>
<dbReference type="EC" id="1.14.-.-" evidence="1"/>
<dbReference type="EMBL" id="CU459141">
    <property type="protein sequence ID" value="CAM85729.1"/>
    <property type="molecule type" value="Genomic_DNA"/>
</dbReference>
<dbReference type="SMR" id="B0VEG5"/>
<dbReference type="EnsemblBacteria" id="CAM85729">
    <property type="protein sequence ID" value="CAM85729"/>
    <property type="gene ID" value="ABAYE0771"/>
</dbReference>
<dbReference type="KEGG" id="aby:ABAYE0771"/>
<dbReference type="HOGENOM" id="CLU_038878_0_0_6"/>
<dbReference type="GO" id="GO:0016705">
    <property type="term" value="F:oxidoreductase activity, acting on paired donors, with incorporation or reduction of molecular oxygen"/>
    <property type="evidence" value="ECO:0007669"/>
    <property type="project" value="UniProtKB-UniRule"/>
</dbReference>
<dbReference type="GO" id="GO:0006400">
    <property type="term" value="P:tRNA modification"/>
    <property type="evidence" value="ECO:0007669"/>
    <property type="project" value="UniProtKB-UniRule"/>
</dbReference>
<dbReference type="CDD" id="cd01518">
    <property type="entry name" value="RHOD_YceA"/>
    <property type="match status" value="1"/>
</dbReference>
<dbReference type="Gene3D" id="3.30.70.100">
    <property type="match status" value="1"/>
</dbReference>
<dbReference type="Gene3D" id="3.40.250.10">
    <property type="entry name" value="Rhodanese-like domain"/>
    <property type="match status" value="1"/>
</dbReference>
<dbReference type="HAMAP" id="MF_00469">
    <property type="entry name" value="TrhO"/>
    <property type="match status" value="1"/>
</dbReference>
<dbReference type="InterPro" id="IPR001763">
    <property type="entry name" value="Rhodanese-like_dom"/>
</dbReference>
<dbReference type="InterPro" id="IPR036873">
    <property type="entry name" value="Rhodanese-like_dom_sf"/>
</dbReference>
<dbReference type="InterPro" id="IPR020936">
    <property type="entry name" value="TrhO"/>
</dbReference>
<dbReference type="InterPro" id="IPR040503">
    <property type="entry name" value="TRHO_N"/>
</dbReference>
<dbReference type="NCBIfam" id="NF001136">
    <property type="entry name" value="PRK00142.1-4"/>
    <property type="match status" value="1"/>
</dbReference>
<dbReference type="PANTHER" id="PTHR43268:SF3">
    <property type="entry name" value="RHODANESE-LIKE DOMAIN-CONTAINING PROTEIN 7-RELATED"/>
    <property type="match status" value="1"/>
</dbReference>
<dbReference type="PANTHER" id="PTHR43268">
    <property type="entry name" value="THIOSULFATE SULFURTRANSFERASE/RHODANESE-LIKE DOMAIN-CONTAINING PROTEIN 2"/>
    <property type="match status" value="1"/>
</dbReference>
<dbReference type="Pfam" id="PF00581">
    <property type="entry name" value="Rhodanese"/>
    <property type="match status" value="1"/>
</dbReference>
<dbReference type="Pfam" id="PF17773">
    <property type="entry name" value="UPF0176_N"/>
    <property type="match status" value="1"/>
</dbReference>
<dbReference type="SMART" id="SM00450">
    <property type="entry name" value="RHOD"/>
    <property type="match status" value="1"/>
</dbReference>
<dbReference type="SUPFAM" id="SSF52821">
    <property type="entry name" value="Rhodanese/Cell cycle control phosphatase"/>
    <property type="match status" value="1"/>
</dbReference>
<dbReference type="PROSITE" id="PS50206">
    <property type="entry name" value="RHODANESE_3"/>
    <property type="match status" value="1"/>
</dbReference>
<proteinExistence type="inferred from homology"/>
<reference key="1">
    <citation type="journal article" date="2008" name="PLoS ONE">
        <title>Comparative analysis of Acinetobacters: three genomes for three lifestyles.</title>
        <authorList>
            <person name="Vallenet D."/>
            <person name="Nordmann P."/>
            <person name="Barbe V."/>
            <person name="Poirel L."/>
            <person name="Mangenot S."/>
            <person name="Bataille E."/>
            <person name="Dossat C."/>
            <person name="Gas S."/>
            <person name="Kreimeyer A."/>
            <person name="Lenoble P."/>
            <person name="Oztas S."/>
            <person name="Poulain J."/>
            <person name="Segurens B."/>
            <person name="Robert C."/>
            <person name="Abergel C."/>
            <person name="Claverie J.-M."/>
            <person name="Raoult D."/>
            <person name="Medigue C."/>
            <person name="Weissenbach J."/>
            <person name="Cruveiller S."/>
        </authorList>
    </citation>
    <scope>NUCLEOTIDE SEQUENCE [LARGE SCALE GENOMIC DNA]</scope>
    <source>
        <strain>AYE</strain>
    </source>
</reference>
<protein>
    <recommendedName>
        <fullName evidence="1">tRNA uridine(34) hydroxylase</fullName>
        <ecNumber evidence="1">1.14.-.-</ecNumber>
    </recommendedName>
    <alternativeName>
        <fullName evidence="1">tRNA hydroxylation protein O</fullName>
    </alternativeName>
</protein>
<sequence length="314" mass="35528">MEFSMNATVEQLAPVEQQATAGWVVAALYQFKEVQDPADLQQRLLDLVKTINLCGTLIVAGEGINGTVAGDREAIDTIHQFLLNEGFNAMEYKESHSSDKPFRKMKIKLKKEIVTLGVEVKPRDLVGHYLDPKEWNELIARDDVILIDTRNDYEYKAGTFKGAIDPKTETFREFPEYVKKELEQHKDKKIAMFCTGGIRCEKSTSLLLQEGFKEVYHLKGGILKYLEETPPDESLWEGECFVFDGRTAVTHGVEEGANIKCHACGWPLTPEESALPSYEHGVSCLYCIDKTTEKQKAGFRMRQSQIAAAKRKRL</sequence>